<sequence>MSRINLLLLCGGGSAEHDISLMSANYFESSLAKSDQFSVLRVELDKLGQYRTAAGDECELTNNREIRFRDETKAPWPVDYVIPCIHGYPGETGDIQSYFNLIQLPYFGCESEASSNCFNKITAKMWFSALGIPNTPYIFLHQYDDEAISQAQTALANWGSIFIKAASQGSSVGCYKVDDSSKVAQVLKDAFGYAPYVVVEKTIKARELEVAVYEYNGEIVATLPGEIICDTNTFYTFDEKYAKSSKARTDVVAKDVSVELSEQIRAYAIKAFKGMKLRHLSRIDFFLTAENEILLNEINTFPGSTPISMFPKMLQNHGHDFTEYLSLVINNQLSAKD</sequence>
<proteinExistence type="inferred from homology"/>
<keyword id="KW-0067">ATP-binding</keyword>
<keyword id="KW-0133">Cell shape</keyword>
<keyword id="KW-0961">Cell wall biogenesis/degradation</keyword>
<keyword id="KW-0963">Cytoplasm</keyword>
<keyword id="KW-0436">Ligase</keyword>
<keyword id="KW-0460">Magnesium</keyword>
<keyword id="KW-0464">Manganese</keyword>
<keyword id="KW-0479">Metal-binding</keyword>
<keyword id="KW-0547">Nucleotide-binding</keyword>
<keyword id="KW-0573">Peptidoglycan synthesis</keyword>
<accession>A1RK54</accession>
<organism>
    <name type="scientific">Shewanella sp. (strain W3-18-1)</name>
    <dbReference type="NCBI Taxonomy" id="351745"/>
    <lineage>
        <taxon>Bacteria</taxon>
        <taxon>Pseudomonadati</taxon>
        <taxon>Pseudomonadota</taxon>
        <taxon>Gammaproteobacteria</taxon>
        <taxon>Alteromonadales</taxon>
        <taxon>Shewanellaceae</taxon>
        <taxon>Shewanella</taxon>
    </lineage>
</organism>
<reference key="1">
    <citation type="submission" date="2006-12" db="EMBL/GenBank/DDBJ databases">
        <title>Complete sequence of Shewanella sp. W3-18-1.</title>
        <authorList>
            <consortium name="US DOE Joint Genome Institute"/>
            <person name="Copeland A."/>
            <person name="Lucas S."/>
            <person name="Lapidus A."/>
            <person name="Barry K."/>
            <person name="Detter J.C."/>
            <person name="Glavina del Rio T."/>
            <person name="Hammon N."/>
            <person name="Israni S."/>
            <person name="Dalin E."/>
            <person name="Tice H."/>
            <person name="Pitluck S."/>
            <person name="Chain P."/>
            <person name="Malfatti S."/>
            <person name="Shin M."/>
            <person name="Vergez L."/>
            <person name="Schmutz J."/>
            <person name="Larimer F."/>
            <person name="Land M."/>
            <person name="Hauser L."/>
            <person name="Kyrpides N."/>
            <person name="Lykidis A."/>
            <person name="Tiedje J."/>
            <person name="Richardson P."/>
        </authorList>
    </citation>
    <scope>NUCLEOTIDE SEQUENCE [LARGE SCALE GENOMIC DNA]</scope>
    <source>
        <strain>W3-18-1</strain>
    </source>
</reference>
<comment type="function">
    <text evidence="2">Cell wall formation.</text>
</comment>
<comment type="catalytic activity">
    <reaction evidence="2">
        <text>2 D-alanine + ATP = D-alanyl-D-alanine + ADP + phosphate + H(+)</text>
        <dbReference type="Rhea" id="RHEA:11224"/>
        <dbReference type="ChEBI" id="CHEBI:15378"/>
        <dbReference type="ChEBI" id="CHEBI:30616"/>
        <dbReference type="ChEBI" id="CHEBI:43474"/>
        <dbReference type="ChEBI" id="CHEBI:57416"/>
        <dbReference type="ChEBI" id="CHEBI:57822"/>
        <dbReference type="ChEBI" id="CHEBI:456216"/>
        <dbReference type="EC" id="6.3.2.4"/>
    </reaction>
</comment>
<comment type="cofactor">
    <cofactor evidence="1">
        <name>Mg(2+)</name>
        <dbReference type="ChEBI" id="CHEBI:18420"/>
    </cofactor>
    <cofactor evidence="1">
        <name>Mn(2+)</name>
        <dbReference type="ChEBI" id="CHEBI:29035"/>
    </cofactor>
    <text evidence="1">Binds 2 magnesium or manganese ions per subunit.</text>
</comment>
<comment type="pathway">
    <text evidence="2">Cell wall biogenesis; peptidoglycan biosynthesis.</text>
</comment>
<comment type="subcellular location">
    <subcellularLocation>
        <location evidence="2">Cytoplasm</location>
    </subcellularLocation>
</comment>
<comment type="similarity">
    <text evidence="2">Belongs to the D-alanine--D-alanine ligase family.</text>
</comment>
<feature type="chain" id="PRO_1000074796" description="D-alanine--D-alanine ligase">
    <location>
        <begin position="1"/>
        <end position="337"/>
    </location>
</feature>
<feature type="domain" description="ATP-grasp" evidence="2">
    <location>
        <begin position="124"/>
        <end position="330"/>
    </location>
</feature>
<feature type="binding site" evidence="2">
    <location>
        <begin position="154"/>
        <end position="209"/>
    </location>
    <ligand>
        <name>ATP</name>
        <dbReference type="ChEBI" id="CHEBI:30616"/>
    </ligand>
</feature>
<feature type="binding site" evidence="2">
    <location>
        <position position="284"/>
    </location>
    <ligand>
        <name>Mg(2+)</name>
        <dbReference type="ChEBI" id="CHEBI:18420"/>
        <label>1</label>
    </ligand>
</feature>
<feature type="binding site" evidence="2">
    <location>
        <position position="297"/>
    </location>
    <ligand>
        <name>Mg(2+)</name>
        <dbReference type="ChEBI" id="CHEBI:18420"/>
        <label>1</label>
    </ligand>
</feature>
<feature type="binding site" evidence="2">
    <location>
        <position position="297"/>
    </location>
    <ligand>
        <name>Mg(2+)</name>
        <dbReference type="ChEBI" id="CHEBI:18420"/>
        <label>2</label>
    </ligand>
</feature>
<feature type="binding site" evidence="2">
    <location>
        <position position="299"/>
    </location>
    <ligand>
        <name>Mg(2+)</name>
        <dbReference type="ChEBI" id="CHEBI:18420"/>
        <label>2</label>
    </ligand>
</feature>
<dbReference type="EC" id="6.3.2.4" evidence="2"/>
<dbReference type="EMBL" id="CP000503">
    <property type="protein sequence ID" value="ABM25049.1"/>
    <property type="molecule type" value="Genomic_DNA"/>
</dbReference>
<dbReference type="RefSeq" id="WP_011789515.1">
    <property type="nucleotide sequence ID" value="NC_008750.1"/>
</dbReference>
<dbReference type="SMR" id="A1RK54"/>
<dbReference type="KEGG" id="shw:Sputw3181_2224"/>
<dbReference type="HOGENOM" id="CLU_039268_0_0_6"/>
<dbReference type="UniPathway" id="UPA00219"/>
<dbReference type="Proteomes" id="UP000002597">
    <property type="component" value="Chromosome"/>
</dbReference>
<dbReference type="GO" id="GO:0005829">
    <property type="term" value="C:cytosol"/>
    <property type="evidence" value="ECO:0007669"/>
    <property type="project" value="TreeGrafter"/>
</dbReference>
<dbReference type="GO" id="GO:0005524">
    <property type="term" value="F:ATP binding"/>
    <property type="evidence" value="ECO:0007669"/>
    <property type="project" value="UniProtKB-KW"/>
</dbReference>
<dbReference type="GO" id="GO:0008716">
    <property type="term" value="F:D-alanine-D-alanine ligase activity"/>
    <property type="evidence" value="ECO:0007669"/>
    <property type="project" value="UniProtKB-UniRule"/>
</dbReference>
<dbReference type="GO" id="GO:0046872">
    <property type="term" value="F:metal ion binding"/>
    <property type="evidence" value="ECO:0007669"/>
    <property type="project" value="UniProtKB-KW"/>
</dbReference>
<dbReference type="GO" id="GO:0071555">
    <property type="term" value="P:cell wall organization"/>
    <property type="evidence" value="ECO:0007669"/>
    <property type="project" value="UniProtKB-KW"/>
</dbReference>
<dbReference type="GO" id="GO:0009252">
    <property type="term" value="P:peptidoglycan biosynthetic process"/>
    <property type="evidence" value="ECO:0007669"/>
    <property type="project" value="UniProtKB-UniRule"/>
</dbReference>
<dbReference type="GO" id="GO:0008360">
    <property type="term" value="P:regulation of cell shape"/>
    <property type="evidence" value="ECO:0007669"/>
    <property type="project" value="UniProtKB-KW"/>
</dbReference>
<dbReference type="FunFam" id="3.40.50.20:FF:000034">
    <property type="entry name" value="D-alanine--D-alanine ligase"/>
    <property type="match status" value="1"/>
</dbReference>
<dbReference type="Gene3D" id="3.40.50.20">
    <property type="match status" value="1"/>
</dbReference>
<dbReference type="Gene3D" id="3.30.1490.20">
    <property type="entry name" value="ATP-grasp fold, A domain"/>
    <property type="match status" value="1"/>
</dbReference>
<dbReference type="Gene3D" id="3.30.470.20">
    <property type="entry name" value="ATP-grasp fold, B domain"/>
    <property type="match status" value="1"/>
</dbReference>
<dbReference type="HAMAP" id="MF_00047">
    <property type="entry name" value="Dala_Dala_lig"/>
    <property type="match status" value="1"/>
</dbReference>
<dbReference type="InterPro" id="IPR011761">
    <property type="entry name" value="ATP-grasp"/>
</dbReference>
<dbReference type="InterPro" id="IPR013815">
    <property type="entry name" value="ATP_grasp_subdomain_1"/>
</dbReference>
<dbReference type="InterPro" id="IPR000291">
    <property type="entry name" value="D-Ala_lig_Van_CS"/>
</dbReference>
<dbReference type="InterPro" id="IPR005905">
    <property type="entry name" value="D_ala_D_ala"/>
</dbReference>
<dbReference type="InterPro" id="IPR011095">
    <property type="entry name" value="Dala_Dala_lig_C"/>
</dbReference>
<dbReference type="InterPro" id="IPR011127">
    <property type="entry name" value="Dala_Dala_lig_N"/>
</dbReference>
<dbReference type="InterPro" id="IPR016185">
    <property type="entry name" value="PreATP-grasp_dom_sf"/>
</dbReference>
<dbReference type="NCBIfam" id="TIGR01205">
    <property type="entry name" value="D_ala_D_alaTIGR"/>
    <property type="match status" value="1"/>
</dbReference>
<dbReference type="NCBIfam" id="NF002527">
    <property type="entry name" value="PRK01966.1-3"/>
    <property type="match status" value="1"/>
</dbReference>
<dbReference type="NCBIfam" id="NF002528">
    <property type="entry name" value="PRK01966.1-4"/>
    <property type="match status" value="1"/>
</dbReference>
<dbReference type="PANTHER" id="PTHR23132">
    <property type="entry name" value="D-ALANINE--D-ALANINE LIGASE"/>
    <property type="match status" value="1"/>
</dbReference>
<dbReference type="PANTHER" id="PTHR23132:SF25">
    <property type="entry name" value="D-ALANINE--D-ALANINE LIGASE A"/>
    <property type="match status" value="1"/>
</dbReference>
<dbReference type="Pfam" id="PF07478">
    <property type="entry name" value="Dala_Dala_lig_C"/>
    <property type="match status" value="1"/>
</dbReference>
<dbReference type="Pfam" id="PF01820">
    <property type="entry name" value="Dala_Dala_lig_N"/>
    <property type="match status" value="1"/>
</dbReference>
<dbReference type="PIRSF" id="PIRSF039102">
    <property type="entry name" value="Ddl/VanB"/>
    <property type="match status" value="1"/>
</dbReference>
<dbReference type="SUPFAM" id="SSF56059">
    <property type="entry name" value="Glutathione synthetase ATP-binding domain-like"/>
    <property type="match status" value="1"/>
</dbReference>
<dbReference type="SUPFAM" id="SSF52440">
    <property type="entry name" value="PreATP-grasp domain"/>
    <property type="match status" value="1"/>
</dbReference>
<dbReference type="PROSITE" id="PS50975">
    <property type="entry name" value="ATP_GRASP"/>
    <property type="match status" value="1"/>
</dbReference>
<dbReference type="PROSITE" id="PS00843">
    <property type="entry name" value="DALA_DALA_LIGASE_1"/>
    <property type="match status" value="1"/>
</dbReference>
<dbReference type="PROSITE" id="PS00844">
    <property type="entry name" value="DALA_DALA_LIGASE_2"/>
    <property type="match status" value="1"/>
</dbReference>
<gene>
    <name evidence="2" type="primary">ddl</name>
    <name type="ordered locus">Sputw3181_2224</name>
</gene>
<evidence type="ECO:0000250" key="1"/>
<evidence type="ECO:0000255" key="2">
    <source>
        <dbReference type="HAMAP-Rule" id="MF_00047"/>
    </source>
</evidence>
<protein>
    <recommendedName>
        <fullName evidence="2">D-alanine--D-alanine ligase</fullName>
        <ecNumber evidence="2">6.3.2.4</ecNumber>
    </recommendedName>
    <alternativeName>
        <fullName evidence="2">D-Ala-D-Ala ligase</fullName>
    </alternativeName>
    <alternativeName>
        <fullName evidence="2">D-alanylalanine synthetase</fullName>
    </alternativeName>
</protein>
<name>DDL_SHESW</name>